<comment type="function">
    <text evidence="4 5">Specifically methylates position 8 of adenine 2503 in 23S rRNA. Can also methylate position 2 of A2503 after the primary methylation at position 8 is complete, to form 2,8-dimethyladenosine; however, C8 is its preferred target. Confers resistance to several classes of antibiotics such as phenicols, lincosamides, oxazolidinones, pleuromutilins, and streptogramin A. The antibiotic resistance conferred by Cfr is provided by methylation at the 8 position and is independent of methylation at the 2 position of A2503.</text>
</comment>
<comment type="catalytic activity">
    <reaction evidence="5">
        <text>adenosine(2503) in 23S rRNA + 2 reduced [2Fe-2S]-[ferredoxin] + 2 S-adenosyl-L-methionine = 8-methyladenosine(2503) in 23S rRNA + 5'-deoxyadenosine + L-methionine + 2 oxidized [2Fe-2S]-[ferredoxin] + S-adenosyl-L-homocysteine</text>
        <dbReference type="Rhea" id="RHEA:42632"/>
        <dbReference type="Rhea" id="RHEA-COMP:10000"/>
        <dbReference type="Rhea" id="RHEA-COMP:10001"/>
        <dbReference type="Rhea" id="RHEA-COMP:10152"/>
        <dbReference type="Rhea" id="RHEA-COMP:10153"/>
        <dbReference type="ChEBI" id="CHEBI:17319"/>
        <dbReference type="ChEBI" id="CHEBI:33737"/>
        <dbReference type="ChEBI" id="CHEBI:33738"/>
        <dbReference type="ChEBI" id="CHEBI:57844"/>
        <dbReference type="ChEBI" id="CHEBI:57856"/>
        <dbReference type="ChEBI" id="CHEBI:59789"/>
        <dbReference type="ChEBI" id="CHEBI:74411"/>
        <dbReference type="ChEBI" id="CHEBI:74543"/>
        <dbReference type="EC" id="2.1.1.224"/>
    </reaction>
</comment>
<comment type="cofactor">
    <cofactor evidence="1">
        <name>[4Fe-4S] cluster</name>
        <dbReference type="ChEBI" id="CHEBI:49883"/>
    </cofactor>
    <text evidence="1">Binds 1 [4Fe-4S] cluster. The cluster is coordinated with 3 cysteines and an exchangeable S-adenosyl-L-methionine.</text>
</comment>
<comment type="subcellular location">
    <subcellularLocation>
        <location evidence="6">Cytoplasm</location>
    </subcellularLocation>
</comment>
<comment type="miscellaneous">
    <text evidence="1">Reaction proceeds by a ping-pong mechanism involving intermediate methylation of a conserved cysteine residue.</text>
</comment>
<comment type="similarity">
    <text evidence="6">Belongs to the radical SAM superfamily. RlmN family. Cfr subfamily.</text>
</comment>
<evidence type="ECO:0000250" key="1"/>
<evidence type="ECO:0000255" key="2"/>
<evidence type="ECO:0000255" key="3">
    <source>
        <dbReference type="PROSITE-ProRule" id="PRU01266"/>
    </source>
</evidence>
<evidence type="ECO:0000269" key="4">
    <source>
    </source>
</evidence>
<evidence type="ECO:0000269" key="5">
    <source>
    </source>
</evidence>
<evidence type="ECO:0000305" key="6"/>
<reference key="1">
    <citation type="journal article" date="2000" name="Antimicrob. Agents Chemother.">
        <title>Identification of a plasmid-borne chloramphenicol-florfenicol resistance gene in Staphylococcus sciuri.</title>
        <authorList>
            <person name="Schwarz S."/>
            <person name="Werckenthin C."/>
            <person name="Kehrenberg C."/>
        </authorList>
    </citation>
    <scope>NUCLEOTIDE SEQUENCE [GENOMIC DNA]</scope>
    <scope>FUNCTION IN ANTIBIOTIC RESISTANCE</scope>
    <source>
        <strain>5233/34</strain>
    </source>
</reference>
<reference key="2">
    <citation type="journal article" date="2004" name="J. Antimicrob. Chemother.">
        <title>Nucleotide sequence and organization of the multiresistance plasmid pSCFS1 from Staphylococcus sciuri.</title>
        <authorList>
            <person name="Kehrenberg C."/>
            <person name="Ojo K.K."/>
            <person name="Schwarz S."/>
        </authorList>
    </citation>
    <scope>NUCLEOTIDE SEQUENCE [GENOMIC DNA]</scope>
</reference>
<reference key="3">
    <citation type="journal article" date="2009" name="RNA">
        <title>Identification of 8-methyladenosine as the modification catalyzed by the radical SAM methyltransferase Cfr that confers antibiotic resistance in bacteria.</title>
        <authorList>
            <person name="Giessing A.M.B."/>
            <person name="Jensen S.S."/>
            <person name="Rasmussen A."/>
            <person name="Hansen L.H."/>
            <person name="Gondela A."/>
            <person name="Long K."/>
            <person name="Vester B."/>
            <person name="Kirpekar F."/>
        </authorList>
    </citation>
    <scope>FUNCTION AS A METHYLTRANSFERASE</scope>
    <scope>CATALYTIC ACTIVITY</scope>
    <scope>ANTIBIOTIC RESISTANCE</scope>
    <scope>MUTAGENESIS OF CYS-110; CYS-112; CYS-116 AND CYS-119</scope>
</reference>
<organism>
    <name type="scientific">Mammaliicoccus sciuri</name>
    <name type="common">Staphylococcus sciuri</name>
    <dbReference type="NCBI Taxonomy" id="1296"/>
    <lineage>
        <taxon>Bacteria</taxon>
        <taxon>Bacillati</taxon>
        <taxon>Bacillota</taxon>
        <taxon>Bacilli</taxon>
        <taxon>Bacillales</taxon>
        <taxon>Staphylococcaceae</taxon>
        <taxon>Mammaliicoccus</taxon>
    </lineage>
</organism>
<gene>
    <name type="primary">cfr</name>
</gene>
<protein>
    <recommendedName>
        <fullName>Ribosomal RNA large subunit methyltransferase Cfr</fullName>
        <ecNumber evidence="5">2.1.1.224</ecNumber>
    </recommendedName>
    <alternativeName>
        <fullName>23S rRNA (adenine(2503)-C(8))-methyltransferase</fullName>
    </alternativeName>
    <alternativeName>
        <fullName>23S rRNA m8A2503 methyltransferase</fullName>
    </alternativeName>
</protein>
<dbReference type="EC" id="2.1.1.224" evidence="5"/>
<dbReference type="EMBL" id="AJ249217">
    <property type="protein sequence ID" value="CAC04525.1"/>
    <property type="molecule type" value="Genomic_DNA"/>
</dbReference>
<dbReference type="EMBL" id="AJ579365">
    <property type="protein sequence ID" value="CAE18142.1"/>
    <property type="molecule type" value="Genomic_DNA"/>
</dbReference>
<dbReference type="RefSeq" id="NP_899167.1">
    <property type="nucleotide sequence ID" value="NC_005076.1"/>
</dbReference>
<dbReference type="RefSeq" id="WP_001010505.1">
    <property type="nucleotide sequence ID" value="NZ_WIVK01000014.1"/>
</dbReference>
<dbReference type="SMR" id="Q9FBG4"/>
<dbReference type="KEGG" id="ag:CAE18142"/>
<dbReference type="BioCyc" id="MetaCyc:MONOMER-16695"/>
<dbReference type="BRENDA" id="2.1.1.192">
    <property type="organism ID" value="8685"/>
</dbReference>
<dbReference type="BRENDA" id="2.1.1.224">
    <property type="organism ID" value="8685"/>
</dbReference>
<dbReference type="GO" id="GO:0005737">
    <property type="term" value="C:cytoplasm"/>
    <property type="evidence" value="ECO:0007669"/>
    <property type="project" value="UniProtKB-SubCell"/>
</dbReference>
<dbReference type="GO" id="GO:0051539">
    <property type="term" value="F:4 iron, 4 sulfur cluster binding"/>
    <property type="evidence" value="ECO:0007669"/>
    <property type="project" value="UniProtKB-UniRule"/>
</dbReference>
<dbReference type="GO" id="GO:0046872">
    <property type="term" value="F:metal ion binding"/>
    <property type="evidence" value="ECO:0007669"/>
    <property type="project" value="UniProtKB-KW"/>
</dbReference>
<dbReference type="GO" id="GO:0016433">
    <property type="term" value="F:rRNA (adenine) methyltransferase activity"/>
    <property type="evidence" value="ECO:0007669"/>
    <property type="project" value="UniProtKB-UniRule"/>
</dbReference>
<dbReference type="GO" id="GO:0019843">
    <property type="term" value="F:rRNA binding"/>
    <property type="evidence" value="ECO:0007669"/>
    <property type="project" value="UniProtKB-UniRule"/>
</dbReference>
<dbReference type="GO" id="GO:0046677">
    <property type="term" value="P:response to antibiotic"/>
    <property type="evidence" value="ECO:0007669"/>
    <property type="project" value="UniProtKB-KW"/>
</dbReference>
<dbReference type="GO" id="GO:0070475">
    <property type="term" value="P:rRNA base methylation"/>
    <property type="evidence" value="ECO:0007669"/>
    <property type="project" value="UniProtKB-UniRule"/>
</dbReference>
<dbReference type="GO" id="GO:0030488">
    <property type="term" value="P:tRNA methylation"/>
    <property type="evidence" value="ECO:0007669"/>
    <property type="project" value="TreeGrafter"/>
</dbReference>
<dbReference type="CDD" id="cd01335">
    <property type="entry name" value="Radical_SAM"/>
    <property type="match status" value="1"/>
</dbReference>
<dbReference type="Gene3D" id="1.10.150.530">
    <property type="match status" value="1"/>
</dbReference>
<dbReference type="Gene3D" id="3.20.20.70">
    <property type="entry name" value="Aldolase class I"/>
    <property type="match status" value="1"/>
</dbReference>
<dbReference type="HAMAP" id="MF_01873">
    <property type="entry name" value="23SrRNA_methyltr_Cfr"/>
    <property type="match status" value="1"/>
</dbReference>
<dbReference type="InterPro" id="IPR013785">
    <property type="entry name" value="Aldolase_TIM"/>
</dbReference>
<dbReference type="InterPro" id="IPR040072">
    <property type="entry name" value="Methyltransferase_A"/>
</dbReference>
<dbReference type="InterPro" id="IPR022881">
    <property type="entry name" value="rRNA_lsu_MeTfrase_Cfr"/>
</dbReference>
<dbReference type="InterPro" id="IPR004383">
    <property type="entry name" value="rRNA_lsu_MTrfase_RlmN/Cfr"/>
</dbReference>
<dbReference type="InterPro" id="IPR007197">
    <property type="entry name" value="rSAM"/>
</dbReference>
<dbReference type="NCBIfam" id="NF000424">
    <property type="entry name" value="CfrAB"/>
    <property type="match status" value="1"/>
</dbReference>
<dbReference type="NCBIfam" id="NF011024">
    <property type="entry name" value="PRK14453.1"/>
    <property type="match status" value="1"/>
</dbReference>
<dbReference type="NCBIfam" id="TIGR04432">
    <property type="entry name" value="rSAM_Cfr"/>
    <property type="match status" value="1"/>
</dbReference>
<dbReference type="PANTHER" id="PTHR30544">
    <property type="entry name" value="23S RRNA METHYLTRANSFERASE"/>
    <property type="match status" value="1"/>
</dbReference>
<dbReference type="PANTHER" id="PTHR30544:SF5">
    <property type="entry name" value="RADICAL SAM CORE DOMAIN-CONTAINING PROTEIN"/>
    <property type="match status" value="1"/>
</dbReference>
<dbReference type="Pfam" id="PF04055">
    <property type="entry name" value="Radical_SAM"/>
    <property type="match status" value="1"/>
</dbReference>
<dbReference type="PIRSF" id="PIRSF006004">
    <property type="entry name" value="CHP00048"/>
    <property type="match status" value="1"/>
</dbReference>
<dbReference type="SFLD" id="SFLDF00275">
    <property type="entry name" value="adenosine_C2_methyltransferase"/>
    <property type="match status" value="1"/>
</dbReference>
<dbReference type="SFLD" id="SFLDF00296">
    <property type="entry name" value="adenosine_C8_methyltransferase"/>
    <property type="match status" value="1"/>
</dbReference>
<dbReference type="SFLD" id="SFLDS00029">
    <property type="entry name" value="Radical_SAM"/>
    <property type="match status" value="2"/>
</dbReference>
<dbReference type="SUPFAM" id="SSF102114">
    <property type="entry name" value="Radical SAM enzymes"/>
    <property type="match status" value="1"/>
</dbReference>
<dbReference type="PROSITE" id="PS51918">
    <property type="entry name" value="RADICAL_SAM"/>
    <property type="match status" value="1"/>
</dbReference>
<feature type="chain" id="PRO_0000350445" description="Ribosomal RNA large subunit methyltransferase Cfr">
    <location>
        <begin position="1"/>
        <end position="349"/>
    </location>
</feature>
<feature type="domain" description="Radical SAM core" evidence="3">
    <location>
        <begin position="98"/>
        <end position="333"/>
    </location>
</feature>
<feature type="active site" description="Proton acceptor" evidence="2">
    <location>
        <position position="91"/>
    </location>
</feature>
<feature type="active site" description="S-methylcysteine intermediate" evidence="1">
    <location>
        <position position="338"/>
    </location>
</feature>
<feature type="binding site" evidence="6">
    <location>
        <position position="112"/>
    </location>
    <ligand>
        <name>[4Fe-4S] cluster</name>
        <dbReference type="ChEBI" id="CHEBI:49883"/>
        <note>4Fe-4S-S-AdoMet</note>
    </ligand>
</feature>
<feature type="binding site" evidence="6">
    <location>
        <position position="116"/>
    </location>
    <ligand>
        <name>[4Fe-4S] cluster</name>
        <dbReference type="ChEBI" id="CHEBI:49883"/>
        <note>4Fe-4S-S-AdoMet</note>
    </ligand>
</feature>
<feature type="binding site" evidence="6">
    <location>
        <position position="119"/>
    </location>
    <ligand>
        <name>[4Fe-4S] cluster</name>
        <dbReference type="ChEBI" id="CHEBI:49883"/>
        <note>4Fe-4S-S-AdoMet</note>
    </ligand>
</feature>
<feature type="binding site" evidence="1">
    <location>
        <begin position="158"/>
        <end position="159"/>
    </location>
    <ligand>
        <name>S-adenosyl-L-methionine</name>
        <dbReference type="ChEBI" id="CHEBI:59789"/>
    </ligand>
</feature>
<feature type="binding site" evidence="1">
    <location>
        <position position="189"/>
    </location>
    <ligand>
        <name>S-adenosyl-L-methionine</name>
        <dbReference type="ChEBI" id="CHEBI:59789"/>
    </ligand>
</feature>
<feature type="binding site" evidence="1">
    <location>
        <begin position="212"/>
        <end position="214"/>
    </location>
    <ligand>
        <name>S-adenosyl-L-methionine</name>
        <dbReference type="ChEBI" id="CHEBI:59789"/>
    </ligand>
</feature>
<feature type="binding site" evidence="1">
    <location>
        <position position="293"/>
    </location>
    <ligand>
        <name>S-adenosyl-L-methionine</name>
        <dbReference type="ChEBI" id="CHEBI:59789"/>
    </ligand>
</feature>
<feature type="disulfide bond" description="(transient)" evidence="1">
    <location>
        <begin position="105"/>
        <end position="338"/>
    </location>
</feature>
<feature type="mutagenesis site" description="No change in activity." evidence="5">
    <original>C</original>
    <variation>A</variation>
    <location>
        <position position="110"/>
    </location>
</feature>
<feature type="mutagenesis site" description="Loss of activity." evidence="5">
    <original>C</original>
    <variation>A</variation>
    <location>
        <position position="112"/>
    </location>
</feature>
<feature type="mutagenesis site" description="Loss of activity." evidence="5">
    <original>C</original>
    <variation>A</variation>
    <location>
        <position position="116"/>
    </location>
</feature>
<feature type="mutagenesis site" description="Loss of activity." evidence="5">
    <original>C</original>
    <variation>A</variation>
    <location>
        <position position="119"/>
    </location>
</feature>
<keyword id="KW-0004">4Fe-4S</keyword>
<keyword id="KW-0046">Antibiotic resistance</keyword>
<keyword id="KW-0963">Cytoplasm</keyword>
<keyword id="KW-1015">Disulfide bond</keyword>
<keyword id="KW-0408">Iron</keyword>
<keyword id="KW-0411">Iron-sulfur</keyword>
<keyword id="KW-0479">Metal-binding</keyword>
<keyword id="KW-0489">Methyltransferase</keyword>
<keyword id="KW-0614">Plasmid</keyword>
<keyword id="KW-0698">rRNA processing</keyword>
<keyword id="KW-0949">S-adenosyl-L-methionine</keyword>
<keyword id="KW-0808">Transferase</keyword>
<name>CFR_MAMSC</name>
<proteinExistence type="evidence at protein level"/>
<sequence length="349" mass="39862">MNFNNKTKYGKIQEFLRSNNEPDYRIKQITNAIFKQRISRFEDMKVLPKLLREDLINNFGETVLNIKLLAEQNSEQVTKVLFEVSKNERVETVNMKYKAGWESFCISSQCGCNFGCKFCATGDIGLKKNLTVDEITDQVLYFHLLGHQIDSISFMGMGEALANRQVFDALDSFTDPNLFALSPRRLSISTIGIIPSIKKITQEYPQVNLTFSLHSPYSEERSKLMPINDRYPIDEVMNILDEHIRLTSRKVYIAYIMLPGVNDSLEHANEVVSLLKSRYKSGKLYHVNLIRYNPTISAPEMYGEANEGQVEAFYKVLKSAGIHVTIRSQFGIDIDAACGQLYGNYQNSQ</sequence>
<accession>Q9FBG4</accession>
<geneLocation type="plasmid">
    <name>pSCFS1</name>
</geneLocation>